<accession>Q6G2A8</accession>
<keyword id="KW-1003">Cell membrane</keyword>
<keyword id="KW-0472">Membrane</keyword>
<keyword id="KW-0812">Transmembrane</keyword>
<keyword id="KW-1133">Transmembrane helix</keyword>
<keyword id="KW-0813">Transport</keyword>
<keyword id="KW-0843">Virulence</keyword>
<proteinExistence type="inferred from homology"/>
<evidence type="ECO:0000255" key="1"/>
<evidence type="ECO:0000269" key="2">
    <source>
    </source>
</evidence>
<evidence type="ECO:0000305" key="3"/>
<comment type="function">
    <text evidence="2">The type IV secretion system VirB/VirD4 is a major virulence determinant for subversion of human endothelial cell (HEC) function. VirB-dependent changes of HEC include massive cytoskeletal rearrangements, a pro-inflammatory activation by nuclear factor NF-kappa-B, inhibition of early and late events of apoptosis, leading to an increased cell survival, and, at high infection doses, a cytostatic or cytotoxic effect, which interferes with a potent VirB-independent mitogenic activity. These changes of HEC require the T4S coupling protein VirD4 and at least one of the effector proteins BepA-G.</text>
</comment>
<comment type="subcellular location">
    <subcellularLocation>
        <location evidence="3">Cell membrane</location>
        <topology evidence="3">Multi-pass membrane protein</topology>
    </subcellularLocation>
</comment>
<comment type="similarity">
    <text evidence="3">Belongs to the VirD4/TraG family.</text>
</comment>
<sequence>MKYTKTQLALISMPIASGALTIFLVPHMLSFVINDLKTNQIYWYVRSEPLLTLMLVAAVSLFYTLSQKLHLRKAITFVSTAFFCITALYYIGSEIKRLNPYVGQQGITWGYALKFMDPMVVFGVILGFVLLAIQVIITSPRTSNVKRAKKGIFGDAAWMNLKEAARIFPSNGQIVIGERYRVDQDNVRNIPFAPGNKTTWGKGGTAPLLTFNLDFGSTHMIFFAGSGGYKTTSTVVPTCLTYTGPIVCLDPSTEIAPMVKFARKKMGNRNVIILDPNSLLTKNFNVLDWLLDENIPRTRREANIVSFSKLLLSEKKSENSSAEYFSTQAHNLLTALLAHVIFSDKYEDSERNLKTLRAILSQSETAVVNQLRMIQETTPSPFIREMVGIFTEMADQTFSGVYTTASKDTQWLSLSNYADLVCGNDFASSDIANGKTDVFLNLPASILNSYPAIGRVIIGAFLNAMVTADGNYKKRVLFVLDEVDLLGYMNILEEARDRGRKYGTSLMLFYQSSGQLVNHFGEAGARSWFESCSFVSYAAIKDLQTAKDISERCGQMTIEVTGTSKSRGLSLTKGSQNINYQQRALILPHEIIQEMRQDEQIILMQGHPPLRCGRAIYFRRKEMLAATEKNRFAPQAKKS</sequence>
<reference key="1">
    <citation type="journal article" date="2005" name="Proc. Natl. Acad. Sci. U.S.A.">
        <title>A bipartite signal mediates the transfer of type IV secretion substrates of Bartonella henselae into human cells.</title>
        <authorList>
            <person name="Schulein R."/>
            <person name="Guye P."/>
            <person name="Rhomberg T.A."/>
            <person name="Schmid M.C."/>
            <person name="Schroeder G."/>
            <person name="Vergunst A.C."/>
            <person name="Carena I."/>
            <person name="Dehio C."/>
        </authorList>
    </citation>
    <scope>NUCLEOTIDE SEQUENCE [GENOMIC DNA]</scope>
    <scope>FUNCTION</scope>
    <source>
        <strain>ATCC 49882 / DSM 28221 / CCUG 30454 / Houston 1</strain>
    </source>
</reference>
<reference key="2">
    <citation type="journal article" date="2004" name="Proc. Natl. Acad. Sci. U.S.A.">
        <title>The louse-borne human pathogen Bartonella quintana is a genomic derivative of the zoonotic agent Bartonella henselae.</title>
        <authorList>
            <person name="Alsmark U.C.M."/>
            <person name="Frank A.C."/>
            <person name="Karlberg E.O."/>
            <person name="Legault B.-A."/>
            <person name="Ardell D.H."/>
            <person name="Canbaeck B."/>
            <person name="Eriksson A.-S."/>
            <person name="Naeslund A.K."/>
            <person name="Handley S.A."/>
            <person name="Huvet M."/>
            <person name="La Scola B."/>
            <person name="Holmberg M."/>
            <person name="Andersson S.G.E."/>
        </authorList>
    </citation>
    <scope>NUCLEOTIDE SEQUENCE [LARGE SCALE GENOMIC DNA]</scope>
    <source>
        <strain>ATCC 49882 / DSM 28221 / CCUG 30454 / Houston 1</strain>
    </source>
</reference>
<gene>
    <name type="primary">virD4</name>
    <name type="synonym">traG</name>
    <name type="ordered locus">BH13380</name>
</gene>
<organism>
    <name type="scientific">Bartonella henselae (strain ATCC 49882 / DSM 28221 / CCUG 30454 / Houston 1)</name>
    <name type="common">Rochalimaea henselae</name>
    <dbReference type="NCBI Taxonomy" id="283166"/>
    <lineage>
        <taxon>Bacteria</taxon>
        <taxon>Pseudomonadati</taxon>
        <taxon>Pseudomonadota</taxon>
        <taxon>Alphaproteobacteria</taxon>
        <taxon>Hyphomicrobiales</taxon>
        <taxon>Bartonellaceae</taxon>
        <taxon>Bartonella</taxon>
    </lineage>
</organism>
<protein>
    <recommendedName>
        <fullName>Type IV secretion system-coupling protein VirD4</fullName>
    </recommendedName>
</protein>
<dbReference type="EMBL" id="AJ556988">
    <property type="protein sequence ID" value="CAD89507.1"/>
    <property type="molecule type" value="Genomic_DNA"/>
</dbReference>
<dbReference type="EMBL" id="BX897699">
    <property type="protein sequence ID" value="CAF28111.1"/>
    <property type="molecule type" value="Genomic_DNA"/>
</dbReference>
<dbReference type="RefSeq" id="WP_011181139.1">
    <property type="nucleotide sequence ID" value="NZ_LRIJ02000001.1"/>
</dbReference>
<dbReference type="SMR" id="Q6G2A8"/>
<dbReference type="IntAct" id="Q6G2A8">
    <property type="interactions" value="1"/>
</dbReference>
<dbReference type="PaxDb" id="283166-BH13380"/>
<dbReference type="DNASU" id="2865237"/>
<dbReference type="EnsemblBacteria" id="CAF28111">
    <property type="protein sequence ID" value="CAF28111"/>
    <property type="gene ID" value="BH13380"/>
</dbReference>
<dbReference type="GeneID" id="92985949"/>
<dbReference type="KEGG" id="bhe:BH13380"/>
<dbReference type="eggNOG" id="COG3505">
    <property type="taxonomic scope" value="Bacteria"/>
</dbReference>
<dbReference type="OrthoDB" id="9759295at2"/>
<dbReference type="Proteomes" id="UP000000421">
    <property type="component" value="Chromosome"/>
</dbReference>
<dbReference type="GO" id="GO:0005886">
    <property type="term" value="C:plasma membrane"/>
    <property type="evidence" value="ECO:0007669"/>
    <property type="project" value="UniProtKB-SubCell"/>
</dbReference>
<dbReference type="CDD" id="cd01127">
    <property type="entry name" value="TrwB_TraG_TraD_VirD4"/>
    <property type="match status" value="1"/>
</dbReference>
<dbReference type="Gene3D" id="3.40.50.300">
    <property type="entry name" value="P-loop containing nucleotide triphosphate hydrolases"/>
    <property type="match status" value="1"/>
</dbReference>
<dbReference type="InterPro" id="IPR027417">
    <property type="entry name" value="P-loop_NTPase"/>
</dbReference>
<dbReference type="InterPro" id="IPR051539">
    <property type="entry name" value="T4SS-coupling_protein"/>
</dbReference>
<dbReference type="InterPro" id="IPR014135">
    <property type="entry name" value="Ti-typ_conjug_TS_TraG-like"/>
</dbReference>
<dbReference type="InterPro" id="IPR003688">
    <property type="entry name" value="TraG/VirD4"/>
</dbReference>
<dbReference type="NCBIfam" id="NF010394">
    <property type="entry name" value="PRK13822.1"/>
    <property type="match status" value="1"/>
</dbReference>
<dbReference type="NCBIfam" id="TIGR02767">
    <property type="entry name" value="TraG-Ti"/>
    <property type="match status" value="1"/>
</dbReference>
<dbReference type="PANTHER" id="PTHR37937">
    <property type="entry name" value="CONJUGATIVE TRANSFER: DNA TRANSPORT"/>
    <property type="match status" value="1"/>
</dbReference>
<dbReference type="PANTHER" id="PTHR37937:SF1">
    <property type="entry name" value="CONJUGATIVE TRANSFER: DNA TRANSPORT"/>
    <property type="match status" value="1"/>
</dbReference>
<dbReference type="Pfam" id="PF02534">
    <property type="entry name" value="T4SS-DNA_transf"/>
    <property type="match status" value="1"/>
</dbReference>
<dbReference type="SUPFAM" id="SSF52540">
    <property type="entry name" value="P-loop containing nucleoside triphosphate hydrolases"/>
    <property type="match status" value="1"/>
</dbReference>
<feature type="chain" id="PRO_0000273257" description="Type IV secretion system-coupling protein VirD4">
    <location>
        <begin position="1"/>
        <end position="639"/>
    </location>
</feature>
<feature type="transmembrane region" description="Helical" evidence="1">
    <location>
        <begin position="13"/>
        <end position="33"/>
    </location>
</feature>
<feature type="transmembrane region" description="Helical" evidence="1">
    <location>
        <begin position="49"/>
        <end position="69"/>
    </location>
</feature>
<feature type="transmembrane region" description="Helical" evidence="1">
    <location>
        <begin position="75"/>
        <end position="95"/>
    </location>
</feature>
<feature type="transmembrane region" description="Helical" evidence="1">
    <location>
        <begin position="118"/>
        <end position="138"/>
    </location>
</feature>
<name>VIRD4_BARHE</name>